<feature type="chain" id="PRO_1000122411" description="Homoserine kinase">
    <location>
        <begin position="1"/>
        <end position="298"/>
    </location>
</feature>
<feature type="binding site" evidence="1">
    <location>
        <begin position="83"/>
        <end position="93"/>
    </location>
    <ligand>
        <name>ATP</name>
        <dbReference type="ChEBI" id="CHEBI:30616"/>
    </ligand>
</feature>
<reference key="1">
    <citation type="submission" date="2008-04" db="EMBL/GenBank/DDBJ databases">
        <title>Complete sequence of Clostridium botulinum strain Eklund.</title>
        <authorList>
            <person name="Brinkac L.M."/>
            <person name="Brown J.L."/>
            <person name="Bruce D."/>
            <person name="Detter C."/>
            <person name="Munk C."/>
            <person name="Smith L.A."/>
            <person name="Smith T.J."/>
            <person name="Sutton G."/>
            <person name="Brettin T.S."/>
        </authorList>
    </citation>
    <scope>NUCLEOTIDE SEQUENCE [LARGE SCALE GENOMIC DNA]</scope>
    <source>
        <strain>Eklund 17B / Type B</strain>
    </source>
</reference>
<organism>
    <name type="scientific">Clostridium botulinum (strain Eklund 17B / Type B)</name>
    <dbReference type="NCBI Taxonomy" id="935198"/>
    <lineage>
        <taxon>Bacteria</taxon>
        <taxon>Bacillati</taxon>
        <taxon>Bacillota</taxon>
        <taxon>Clostridia</taxon>
        <taxon>Eubacteriales</taxon>
        <taxon>Clostridiaceae</taxon>
        <taxon>Clostridium</taxon>
    </lineage>
</organism>
<gene>
    <name evidence="1" type="primary">thrB</name>
    <name type="ordered locus">CLL_A2897</name>
</gene>
<dbReference type="EC" id="2.7.1.39" evidence="1"/>
<dbReference type="EMBL" id="CP001056">
    <property type="protein sequence ID" value="ACD24465.1"/>
    <property type="molecule type" value="Genomic_DNA"/>
</dbReference>
<dbReference type="SMR" id="B2TPC7"/>
<dbReference type="KEGG" id="cbk:CLL_A2897"/>
<dbReference type="PATRIC" id="fig|935198.13.peg.2859"/>
<dbReference type="HOGENOM" id="CLU_041243_0_0_9"/>
<dbReference type="UniPathway" id="UPA00050">
    <property type="reaction ID" value="UER00064"/>
</dbReference>
<dbReference type="Proteomes" id="UP000001195">
    <property type="component" value="Chromosome"/>
</dbReference>
<dbReference type="GO" id="GO:0005737">
    <property type="term" value="C:cytoplasm"/>
    <property type="evidence" value="ECO:0007669"/>
    <property type="project" value="UniProtKB-SubCell"/>
</dbReference>
<dbReference type="GO" id="GO:0005524">
    <property type="term" value="F:ATP binding"/>
    <property type="evidence" value="ECO:0007669"/>
    <property type="project" value="UniProtKB-UniRule"/>
</dbReference>
<dbReference type="GO" id="GO:0004413">
    <property type="term" value="F:homoserine kinase activity"/>
    <property type="evidence" value="ECO:0007669"/>
    <property type="project" value="UniProtKB-UniRule"/>
</dbReference>
<dbReference type="GO" id="GO:0009088">
    <property type="term" value="P:threonine biosynthetic process"/>
    <property type="evidence" value="ECO:0007669"/>
    <property type="project" value="UniProtKB-UniRule"/>
</dbReference>
<dbReference type="Gene3D" id="3.30.230.10">
    <property type="match status" value="1"/>
</dbReference>
<dbReference type="Gene3D" id="3.30.70.890">
    <property type="entry name" value="GHMP kinase, C-terminal domain"/>
    <property type="match status" value="1"/>
</dbReference>
<dbReference type="HAMAP" id="MF_00384">
    <property type="entry name" value="Homoser_kinase"/>
    <property type="match status" value="1"/>
</dbReference>
<dbReference type="InterPro" id="IPR013750">
    <property type="entry name" value="GHMP_kinase_C_dom"/>
</dbReference>
<dbReference type="InterPro" id="IPR036554">
    <property type="entry name" value="GHMP_kinase_C_sf"/>
</dbReference>
<dbReference type="InterPro" id="IPR006204">
    <property type="entry name" value="GHMP_kinase_N_dom"/>
</dbReference>
<dbReference type="InterPro" id="IPR006203">
    <property type="entry name" value="GHMP_knse_ATP-bd_CS"/>
</dbReference>
<dbReference type="InterPro" id="IPR000870">
    <property type="entry name" value="Homoserine_kinase"/>
</dbReference>
<dbReference type="InterPro" id="IPR020568">
    <property type="entry name" value="Ribosomal_Su5_D2-typ_SF"/>
</dbReference>
<dbReference type="InterPro" id="IPR014721">
    <property type="entry name" value="Ribsml_uS5_D2-typ_fold_subgr"/>
</dbReference>
<dbReference type="NCBIfam" id="TIGR00191">
    <property type="entry name" value="thrB"/>
    <property type="match status" value="1"/>
</dbReference>
<dbReference type="PANTHER" id="PTHR20861:SF1">
    <property type="entry name" value="HOMOSERINE KINASE"/>
    <property type="match status" value="1"/>
</dbReference>
<dbReference type="PANTHER" id="PTHR20861">
    <property type="entry name" value="HOMOSERINE/4-DIPHOSPHOCYTIDYL-2-C-METHYL-D-ERYTHRITOL KINASE"/>
    <property type="match status" value="1"/>
</dbReference>
<dbReference type="Pfam" id="PF08544">
    <property type="entry name" value="GHMP_kinases_C"/>
    <property type="match status" value="1"/>
</dbReference>
<dbReference type="Pfam" id="PF00288">
    <property type="entry name" value="GHMP_kinases_N"/>
    <property type="match status" value="1"/>
</dbReference>
<dbReference type="PIRSF" id="PIRSF000676">
    <property type="entry name" value="Homoser_kin"/>
    <property type="match status" value="1"/>
</dbReference>
<dbReference type="PRINTS" id="PR00958">
    <property type="entry name" value="HOMSERKINASE"/>
</dbReference>
<dbReference type="SUPFAM" id="SSF55060">
    <property type="entry name" value="GHMP Kinase, C-terminal domain"/>
    <property type="match status" value="1"/>
</dbReference>
<dbReference type="SUPFAM" id="SSF54211">
    <property type="entry name" value="Ribosomal protein S5 domain 2-like"/>
    <property type="match status" value="1"/>
</dbReference>
<dbReference type="PROSITE" id="PS00627">
    <property type="entry name" value="GHMP_KINASES_ATP"/>
    <property type="match status" value="1"/>
</dbReference>
<sequence>MIKVRVPATSANMGPGFDSMGMAVKVYNEFAFREINNGLNFNGVPEEFCNEDNIIYKAMKYCFDKADYKIKGLNISVLNQDIPISRGLGSSSSCIVGGLVGANEILGGKFSKDELLEMAVKIEGHPDNVAPALFGGMVVAIIENNKTVYNKIEIKDKVKFITIVPDFRLSTEKARTVLPKQISRADGIYNIGRAALMISCFVTDRYDLIRSACNDALHQNYRKELIPHFDDVYNKCYELGALGCYLSGAGPTIMAIIDNGANGFSNNIKQYLKDKDIKWGVLELQADNKGAFVIKGDS</sequence>
<keyword id="KW-0028">Amino-acid biosynthesis</keyword>
<keyword id="KW-0067">ATP-binding</keyword>
<keyword id="KW-0963">Cytoplasm</keyword>
<keyword id="KW-0418">Kinase</keyword>
<keyword id="KW-0547">Nucleotide-binding</keyword>
<keyword id="KW-0791">Threonine biosynthesis</keyword>
<keyword id="KW-0808">Transferase</keyword>
<proteinExistence type="inferred from homology"/>
<evidence type="ECO:0000255" key="1">
    <source>
        <dbReference type="HAMAP-Rule" id="MF_00384"/>
    </source>
</evidence>
<comment type="function">
    <text evidence="1">Catalyzes the ATP-dependent phosphorylation of L-homoserine to L-homoserine phosphate.</text>
</comment>
<comment type="catalytic activity">
    <reaction evidence="1">
        <text>L-homoserine + ATP = O-phospho-L-homoserine + ADP + H(+)</text>
        <dbReference type="Rhea" id="RHEA:13985"/>
        <dbReference type="ChEBI" id="CHEBI:15378"/>
        <dbReference type="ChEBI" id="CHEBI:30616"/>
        <dbReference type="ChEBI" id="CHEBI:57476"/>
        <dbReference type="ChEBI" id="CHEBI:57590"/>
        <dbReference type="ChEBI" id="CHEBI:456216"/>
        <dbReference type="EC" id="2.7.1.39"/>
    </reaction>
</comment>
<comment type="pathway">
    <text evidence="1">Amino-acid biosynthesis; L-threonine biosynthesis; L-threonine from L-aspartate: step 4/5.</text>
</comment>
<comment type="subcellular location">
    <subcellularLocation>
        <location evidence="1">Cytoplasm</location>
    </subcellularLocation>
</comment>
<comment type="similarity">
    <text evidence="1">Belongs to the GHMP kinase family. Homoserine kinase subfamily.</text>
</comment>
<name>KHSE_CLOBB</name>
<protein>
    <recommendedName>
        <fullName evidence="1">Homoserine kinase</fullName>
        <shortName evidence="1">HK</shortName>
        <shortName evidence="1">HSK</shortName>
        <ecNumber evidence="1">2.7.1.39</ecNumber>
    </recommendedName>
</protein>
<accession>B2TPC7</accession>